<accession>P0DD67</accession>
<accession>Q79XJ9</accession>
<accession>Q8K6X4</accession>
<dbReference type="EC" id="1.3.98.1"/>
<dbReference type="EMBL" id="BA000034">
    <property type="protein sequence ID" value="BAC63869.1"/>
    <property type="molecule type" value="Genomic_DNA"/>
</dbReference>
<dbReference type="RefSeq" id="WP_011054669.1">
    <property type="nucleotide sequence ID" value="NC_004606.1"/>
</dbReference>
<dbReference type="SMR" id="P0DD67"/>
<dbReference type="KEGG" id="sps:SPs0774"/>
<dbReference type="HOGENOM" id="CLU_042042_3_0_9"/>
<dbReference type="UniPathway" id="UPA00070"/>
<dbReference type="GO" id="GO:0005737">
    <property type="term" value="C:cytoplasm"/>
    <property type="evidence" value="ECO:0007669"/>
    <property type="project" value="UniProtKB-SubCell"/>
</dbReference>
<dbReference type="GO" id="GO:1990663">
    <property type="term" value="F:dihydroorotate dehydrogenase (fumarate) activity"/>
    <property type="evidence" value="ECO:0007669"/>
    <property type="project" value="UniProtKB-EC"/>
</dbReference>
<dbReference type="GO" id="GO:0006207">
    <property type="term" value="P:'de novo' pyrimidine nucleobase biosynthetic process"/>
    <property type="evidence" value="ECO:0007669"/>
    <property type="project" value="InterPro"/>
</dbReference>
<dbReference type="GO" id="GO:0044205">
    <property type="term" value="P:'de novo' UMP biosynthetic process"/>
    <property type="evidence" value="ECO:0007669"/>
    <property type="project" value="UniProtKB-UniRule"/>
</dbReference>
<dbReference type="CDD" id="cd04741">
    <property type="entry name" value="DHOD_1A_like"/>
    <property type="match status" value="1"/>
</dbReference>
<dbReference type="FunFam" id="3.20.20.70:FF:000027">
    <property type="entry name" value="Dihydropyrimidine dehydrogenase [NADP(+)]"/>
    <property type="match status" value="1"/>
</dbReference>
<dbReference type="Gene3D" id="3.20.20.70">
    <property type="entry name" value="Aldolase class I"/>
    <property type="match status" value="1"/>
</dbReference>
<dbReference type="HAMAP" id="MF_00224">
    <property type="entry name" value="DHO_dh_type1"/>
    <property type="match status" value="1"/>
</dbReference>
<dbReference type="InterPro" id="IPR013785">
    <property type="entry name" value="Aldolase_TIM"/>
</dbReference>
<dbReference type="InterPro" id="IPR050074">
    <property type="entry name" value="DHO_dehydrogenase"/>
</dbReference>
<dbReference type="InterPro" id="IPR033886">
    <property type="entry name" value="DHOD_1A"/>
</dbReference>
<dbReference type="InterPro" id="IPR024920">
    <property type="entry name" value="Dihydroorotate_DH_1"/>
</dbReference>
<dbReference type="InterPro" id="IPR012135">
    <property type="entry name" value="Dihydroorotate_DH_1_2"/>
</dbReference>
<dbReference type="InterPro" id="IPR005720">
    <property type="entry name" value="Dihydroorotate_DH_cat"/>
</dbReference>
<dbReference type="InterPro" id="IPR001295">
    <property type="entry name" value="Dihydroorotate_DH_CS"/>
</dbReference>
<dbReference type="NCBIfam" id="NF002702">
    <property type="entry name" value="PRK02506.1"/>
    <property type="match status" value="1"/>
</dbReference>
<dbReference type="PANTHER" id="PTHR48109:SF1">
    <property type="entry name" value="DIHYDROOROTATE DEHYDROGENASE (FUMARATE)"/>
    <property type="match status" value="1"/>
</dbReference>
<dbReference type="PANTHER" id="PTHR48109">
    <property type="entry name" value="DIHYDROOROTATE DEHYDROGENASE (QUINONE), MITOCHONDRIAL-RELATED"/>
    <property type="match status" value="1"/>
</dbReference>
<dbReference type="Pfam" id="PF01180">
    <property type="entry name" value="DHO_dh"/>
    <property type="match status" value="1"/>
</dbReference>
<dbReference type="PIRSF" id="PIRSF000164">
    <property type="entry name" value="DHO_oxidase"/>
    <property type="match status" value="1"/>
</dbReference>
<dbReference type="SUPFAM" id="SSF51395">
    <property type="entry name" value="FMN-linked oxidoreductases"/>
    <property type="match status" value="1"/>
</dbReference>
<dbReference type="PROSITE" id="PS00912">
    <property type="entry name" value="DHODEHASE_2"/>
    <property type="match status" value="1"/>
</dbReference>
<proteinExistence type="inferred from homology"/>
<gene>
    <name type="primary">pyrD</name>
    <name type="ordered locus">SPs0774</name>
</gene>
<protein>
    <recommendedName>
        <fullName>Putative dihydroorotate dehydrogenase A (fumarate)</fullName>
        <shortName>DHOD A</shortName>
        <shortName>DHODase A</shortName>
        <shortName>DHOdehase A</shortName>
        <ecNumber>1.3.98.1</ecNumber>
    </recommendedName>
</protein>
<organism>
    <name type="scientific">Streptococcus pyogenes serotype M3 (strain SSI-1)</name>
    <dbReference type="NCBI Taxonomy" id="193567"/>
    <lineage>
        <taxon>Bacteria</taxon>
        <taxon>Bacillati</taxon>
        <taxon>Bacillota</taxon>
        <taxon>Bacilli</taxon>
        <taxon>Lactobacillales</taxon>
        <taxon>Streptococcaceae</taxon>
        <taxon>Streptococcus</taxon>
    </lineage>
</organism>
<evidence type="ECO:0000250" key="1"/>
<evidence type="ECO:0000305" key="2"/>
<name>PYRDA_STRPQ</name>
<sequence>MVSTATQIGHFSFDNCLMNAAGVYCMTKEELMEVEKSQAASFVTKTGTLEVRPGNPEPRYADTRLGSINSMGLPNNGFRYYLDFVSDLAKTGQHKPHFLSVVGLSPTETETILKVIMASDYEGLVELNLSCPNVPGKPQIAYDFETTDQLLENIFTYYTKPLGIKLPPYFDIVHFDQAAAIFNKYPLSFVNCVNSIGNGLVIEDEQVLIKPKNGFGGIGGDYIKPTALANVHAFYKRLKPSIHIIGTGGIKTGRDAFEHILCGASMVQIGTALHQEGPAIFERVTKELKTIMVEKGYQSLDDFRGNLRYKD</sequence>
<comment type="function">
    <text evidence="1">Catalyzes the conversion of dihydroorotate to orotate with fumarate as the electron acceptor.</text>
</comment>
<comment type="catalytic activity">
    <reaction>
        <text>(S)-dihydroorotate + fumarate = orotate + succinate</text>
        <dbReference type="Rhea" id="RHEA:30059"/>
        <dbReference type="ChEBI" id="CHEBI:29806"/>
        <dbReference type="ChEBI" id="CHEBI:30031"/>
        <dbReference type="ChEBI" id="CHEBI:30839"/>
        <dbReference type="ChEBI" id="CHEBI:30864"/>
        <dbReference type="EC" id="1.3.98.1"/>
    </reaction>
</comment>
<comment type="cofactor">
    <cofactor evidence="1">
        <name>FMN</name>
        <dbReference type="ChEBI" id="CHEBI:58210"/>
    </cofactor>
    <text evidence="1">Binds 1 FMN per subunit.</text>
</comment>
<comment type="pathway">
    <text>Pyrimidine metabolism; UMP biosynthesis via de novo pathway.</text>
</comment>
<comment type="subunit">
    <text evidence="1">Homodimer.</text>
</comment>
<comment type="subcellular location">
    <subcellularLocation>
        <location evidence="1">Cytoplasm</location>
    </subcellularLocation>
</comment>
<comment type="similarity">
    <text evidence="2">Belongs to the dihydroorotate dehydrogenase family. Type 1 subfamily.</text>
</comment>
<keyword id="KW-0963">Cytoplasm</keyword>
<keyword id="KW-0285">Flavoprotein</keyword>
<keyword id="KW-0288">FMN</keyword>
<keyword id="KW-0560">Oxidoreductase</keyword>
<keyword id="KW-0665">Pyrimidine biosynthesis</keyword>
<reference key="1">
    <citation type="journal article" date="2003" name="Genome Res.">
        <title>Genome sequence of an M3 strain of Streptococcus pyogenes reveals a large-scale genomic rearrangement in invasive strains and new insights into phage evolution.</title>
        <authorList>
            <person name="Nakagawa I."/>
            <person name="Kurokawa K."/>
            <person name="Yamashita A."/>
            <person name="Nakata M."/>
            <person name="Tomiyasu Y."/>
            <person name="Okahashi N."/>
            <person name="Kawabata S."/>
            <person name="Yamazaki K."/>
            <person name="Shiba T."/>
            <person name="Yasunaga T."/>
            <person name="Hayashi H."/>
            <person name="Hattori M."/>
            <person name="Hamada S."/>
        </authorList>
    </citation>
    <scope>NUCLEOTIDE SEQUENCE [LARGE SCALE GENOMIC DNA]</scope>
    <source>
        <strain>SSI-1</strain>
    </source>
</reference>
<feature type="chain" id="PRO_0000411473" description="Putative dihydroorotate dehydrogenase A (fumarate)">
    <location>
        <begin position="1"/>
        <end position="311"/>
    </location>
</feature>
<feature type="active site" description="Nucleophile">
    <location>
        <position position="131"/>
    </location>
</feature>
<feature type="binding site" evidence="1">
    <location>
        <begin position="45"/>
        <end position="46"/>
    </location>
    <ligand>
        <name>FMN</name>
        <dbReference type="ChEBI" id="CHEBI:58210"/>
    </ligand>
</feature>
<feature type="binding site" evidence="1">
    <location>
        <position position="45"/>
    </location>
    <ligand>
        <name>substrate</name>
    </ligand>
</feature>
<feature type="binding site" evidence="1">
    <location>
        <begin position="69"/>
        <end position="73"/>
    </location>
    <ligand>
        <name>substrate</name>
    </ligand>
</feature>
<feature type="binding site" evidence="1">
    <location>
        <position position="128"/>
    </location>
    <ligand>
        <name>FMN</name>
        <dbReference type="ChEBI" id="CHEBI:58210"/>
    </ligand>
</feature>
<feature type="binding site" evidence="1">
    <location>
        <position position="128"/>
    </location>
    <ligand>
        <name>substrate</name>
    </ligand>
</feature>
<feature type="binding site" evidence="1">
    <location>
        <position position="165"/>
    </location>
    <ligand>
        <name>FMN</name>
        <dbReference type="ChEBI" id="CHEBI:58210"/>
    </ligand>
</feature>
<feature type="binding site" evidence="1">
    <location>
        <position position="193"/>
    </location>
    <ligand>
        <name>FMN</name>
        <dbReference type="ChEBI" id="CHEBI:58210"/>
    </ligand>
</feature>
<feature type="binding site" evidence="1">
    <location>
        <begin position="194"/>
        <end position="195"/>
    </location>
    <ligand>
        <name>substrate</name>
    </ligand>
</feature>
<feature type="binding site" evidence="1">
    <location>
        <position position="220"/>
    </location>
    <ligand>
        <name>FMN</name>
        <dbReference type="ChEBI" id="CHEBI:58210"/>
    </ligand>
</feature>
<feature type="binding site" evidence="1">
    <location>
        <begin position="248"/>
        <end position="249"/>
    </location>
    <ligand>
        <name>FMN</name>
        <dbReference type="ChEBI" id="CHEBI:58210"/>
    </ligand>
</feature>
<feature type="binding site" evidence="1">
    <location>
        <begin position="270"/>
        <end position="271"/>
    </location>
    <ligand>
        <name>FMN</name>
        <dbReference type="ChEBI" id="CHEBI:58210"/>
    </ligand>
</feature>